<organism>
    <name type="scientific">Mesocricetus auratus</name>
    <name type="common">Golden hamster</name>
    <dbReference type="NCBI Taxonomy" id="10036"/>
    <lineage>
        <taxon>Eukaryota</taxon>
        <taxon>Metazoa</taxon>
        <taxon>Chordata</taxon>
        <taxon>Craniata</taxon>
        <taxon>Vertebrata</taxon>
        <taxon>Euteleostomi</taxon>
        <taxon>Mammalia</taxon>
        <taxon>Eutheria</taxon>
        <taxon>Euarchontoglires</taxon>
        <taxon>Glires</taxon>
        <taxon>Rodentia</taxon>
        <taxon>Myomorpha</taxon>
        <taxon>Muroidea</taxon>
        <taxon>Cricetidae</taxon>
        <taxon>Cricetinae</taxon>
        <taxon>Mesocricetus</taxon>
    </lineage>
</organism>
<accession>P86216</accession>
<accession>A0A1U7Q6T2</accession>
<name>TPIS_MESAU</name>
<feature type="initiator methionine" description="Removed" evidence="4">
    <location>
        <position position="1"/>
    </location>
</feature>
<feature type="chain" id="PRO_0000394304" description="Triosephosphate isomerase">
    <location>
        <begin position="2"/>
        <end position="249"/>
    </location>
</feature>
<feature type="active site" description="Proton acceptor" evidence="4 5">
    <location>
        <position position="166"/>
    </location>
</feature>
<feature type="binding site" evidence="4 5">
    <location>
        <position position="12"/>
    </location>
    <ligand>
        <name>substrate</name>
    </ligand>
</feature>
<feature type="binding site" evidence="4 5">
    <location>
        <position position="14"/>
    </location>
    <ligand>
        <name>substrate</name>
    </ligand>
</feature>
<feature type="modified residue" description="N6-acetyllysine" evidence="4">
    <location>
        <position position="14"/>
    </location>
</feature>
<feature type="modified residue" description="3'-nitrotyrosine" evidence="2">
    <location>
        <position position="68"/>
    </location>
</feature>
<feature type="modified residue" description="Phosphoserine" evidence="4">
    <location>
        <position position="80"/>
    </location>
</feature>
<feature type="modified residue" description="Phosphoserine" evidence="3">
    <location>
        <position position="106"/>
    </location>
</feature>
<feature type="modified residue" description="N6-succinyllysine" evidence="2">
    <location>
        <position position="149"/>
    </location>
</feature>
<feature type="modified residue" description="N6-acetyllysine; alternate" evidence="2">
    <location>
        <position position="156"/>
    </location>
</feature>
<feature type="modified residue" description="N6-succinyllysine; alternate" evidence="2">
    <location>
        <position position="156"/>
    </location>
</feature>
<feature type="modified residue" description="Phosphoserine" evidence="2">
    <location>
        <position position="159"/>
    </location>
</feature>
<feature type="modified residue" description="Phosphothreonine" evidence="2">
    <location>
        <position position="173"/>
    </location>
</feature>
<feature type="modified residue" description="N6-acetyllysine; alternate" evidence="4">
    <location>
        <position position="194"/>
    </location>
</feature>
<feature type="modified residue" description="N6-methyllysine; alternate" evidence="4">
    <location>
        <position position="194"/>
    </location>
</feature>
<feature type="modified residue" description="N6-succinyllysine; alternate" evidence="2">
    <location>
        <position position="194"/>
    </location>
</feature>
<feature type="modified residue" description="Phosphoserine" evidence="3">
    <location>
        <position position="198"/>
    </location>
</feature>
<feature type="modified residue" description="3'-nitrotyrosine" evidence="2">
    <location>
        <position position="209"/>
    </location>
</feature>
<feature type="modified residue" description="Phosphoserine" evidence="4">
    <location>
        <position position="212"/>
    </location>
</feature>
<feature type="modified residue" description="Phosphothreonine" evidence="4">
    <location>
        <position position="214"/>
    </location>
</feature>
<feature type="modified residue" description="Phosphoserine" evidence="4">
    <location>
        <position position="223"/>
    </location>
</feature>
<feature type="modified residue" description="N6-acetyllysine" evidence="4">
    <location>
        <position position="238"/>
    </location>
</feature>
<feature type="cross-link" description="Glycyl lysine isopeptide (Lys-Gly) (interchain with G-Cter in SUMO1)" evidence="4">
    <location>
        <position position="142"/>
    </location>
</feature>
<feature type="splice variant" id="VSP_060723" description="In isoform 2." evidence="6">
    <original>M</original>
    <variation>MAEGGKEEEFCFTALYISGQWPAPCVHTDLQRVSCSTM</variation>
    <location>
        <position position="1"/>
    </location>
</feature>
<evidence type="ECO:0000250" key="1">
    <source>
        <dbReference type="UniProtKB" id="P00939"/>
    </source>
</evidence>
<evidence type="ECO:0000250" key="2">
    <source>
        <dbReference type="UniProtKB" id="P17751"/>
    </source>
</evidence>
<evidence type="ECO:0000250" key="3">
    <source>
        <dbReference type="UniProtKB" id="P48500"/>
    </source>
</evidence>
<evidence type="ECO:0000250" key="4">
    <source>
        <dbReference type="UniProtKB" id="P60174"/>
    </source>
</evidence>
<evidence type="ECO:0000255" key="5">
    <source>
        <dbReference type="PROSITE-ProRule" id="PRU10127"/>
    </source>
</evidence>
<evidence type="ECO:0000305" key="6"/>
<dbReference type="EC" id="5.3.1.1" evidence="5"/>
<dbReference type="EC" id="4.2.3.3" evidence="1"/>
<dbReference type="RefSeq" id="XP_005066069.1">
    <molecule id="P86216-2"/>
    <property type="nucleotide sequence ID" value="XM_005066012.2"/>
</dbReference>
<dbReference type="SMR" id="P86216"/>
<dbReference type="STRING" id="10036.ENSMAUP00000004861"/>
<dbReference type="Ensembl" id="ENSMAUT00000007970">
    <molecule id="P86216-1"/>
    <property type="protein sequence ID" value="ENSMAUP00000004861"/>
    <property type="gene ID" value="ENSMAUG00000006567"/>
</dbReference>
<dbReference type="GeneID" id="101843280"/>
<dbReference type="KEGG" id="maua:101843280"/>
<dbReference type="CTD" id="7167"/>
<dbReference type="eggNOG" id="KOG1643">
    <property type="taxonomic scope" value="Eukaryota"/>
</dbReference>
<dbReference type="OrthoDB" id="6715177at2759"/>
<dbReference type="UniPathway" id="UPA00109">
    <property type="reaction ID" value="UER00189"/>
</dbReference>
<dbReference type="UniPathway" id="UPA00138"/>
<dbReference type="Proteomes" id="UP000189706">
    <property type="component" value="Unplaced"/>
</dbReference>
<dbReference type="GO" id="GO:0005829">
    <property type="term" value="C:cytosol"/>
    <property type="evidence" value="ECO:0007669"/>
    <property type="project" value="TreeGrafter"/>
</dbReference>
<dbReference type="GO" id="GO:0008929">
    <property type="term" value="F:methylglyoxal synthase activity"/>
    <property type="evidence" value="ECO:0000250"/>
    <property type="project" value="UniProtKB"/>
</dbReference>
<dbReference type="GO" id="GO:0042803">
    <property type="term" value="F:protein homodimerization activity"/>
    <property type="evidence" value="ECO:0000250"/>
    <property type="project" value="UniProtKB"/>
</dbReference>
<dbReference type="GO" id="GO:0004807">
    <property type="term" value="F:triose-phosphate isomerase activity"/>
    <property type="evidence" value="ECO:0000250"/>
    <property type="project" value="UniProtKB"/>
</dbReference>
<dbReference type="GO" id="GO:0006094">
    <property type="term" value="P:gluconeogenesis"/>
    <property type="evidence" value="ECO:0007669"/>
    <property type="project" value="UniProtKB-UniPathway"/>
</dbReference>
<dbReference type="GO" id="GO:0046166">
    <property type="term" value="P:glyceraldehyde-3-phosphate biosynthetic process"/>
    <property type="evidence" value="ECO:0000250"/>
    <property type="project" value="UniProtKB"/>
</dbReference>
<dbReference type="GO" id="GO:0019563">
    <property type="term" value="P:glycerol catabolic process"/>
    <property type="evidence" value="ECO:0007669"/>
    <property type="project" value="TreeGrafter"/>
</dbReference>
<dbReference type="GO" id="GO:0006096">
    <property type="term" value="P:glycolytic process"/>
    <property type="evidence" value="ECO:0007669"/>
    <property type="project" value="UniProtKB-UniPathway"/>
</dbReference>
<dbReference type="GO" id="GO:0019242">
    <property type="term" value="P:methylglyoxal biosynthetic process"/>
    <property type="evidence" value="ECO:0000250"/>
    <property type="project" value="UniProtKB"/>
</dbReference>
<dbReference type="CDD" id="cd00311">
    <property type="entry name" value="TIM"/>
    <property type="match status" value="1"/>
</dbReference>
<dbReference type="FunFam" id="3.20.20.70:FF:000025">
    <property type="entry name" value="Triosephosphate isomerase"/>
    <property type="match status" value="1"/>
</dbReference>
<dbReference type="Gene3D" id="3.20.20.70">
    <property type="entry name" value="Aldolase class I"/>
    <property type="match status" value="1"/>
</dbReference>
<dbReference type="HAMAP" id="MF_00147_B">
    <property type="entry name" value="TIM_B"/>
    <property type="match status" value="1"/>
</dbReference>
<dbReference type="InterPro" id="IPR013785">
    <property type="entry name" value="Aldolase_TIM"/>
</dbReference>
<dbReference type="InterPro" id="IPR035990">
    <property type="entry name" value="TIM_sf"/>
</dbReference>
<dbReference type="InterPro" id="IPR022896">
    <property type="entry name" value="TrioseP_Isoase_bac/euk"/>
</dbReference>
<dbReference type="InterPro" id="IPR000652">
    <property type="entry name" value="Triosephosphate_isomerase"/>
</dbReference>
<dbReference type="InterPro" id="IPR020861">
    <property type="entry name" value="Triosephosphate_isomerase_AS"/>
</dbReference>
<dbReference type="NCBIfam" id="TIGR00419">
    <property type="entry name" value="tim"/>
    <property type="match status" value="1"/>
</dbReference>
<dbReference type="PANTHER" id="PTHR21139">
    <property type="entry name" value="TRIOSEPHOSPHATE ISOMERASE"/>
    <property type="match status" value="1"/>
</dbReference>
<dbReference type="PANTHER" id="PTHR21139:SF2">
    <property type="entry name" value="TRIOSEPHOSPHATE ISOMERASE"/>
    <property type="match status" value="1"/>
</dbReference>
<dbReference type="Pfam" id="PF00121">
    <property type="entry name" value="TIM"/>
    <property type="match status" value="1"/>
</dbReference>
<dbReference type="SUPFAM" id="SSF51351">
    <property type="entry name" value="Triosephosphate isomerase (TIM)"/>
    <property type="match status" value="1"/>
</dbReference>
<dbReference type="PROSITE" id="PS00171">
    <property type="entry name" value="TIM_1"/>
    <property type="match status" value="1"/>
</dbReference>
<dbReference type="PROSITE" id="PS51440">
    <property type="entry name" value="TIM_2"/>
    <property type="match status" value="1"/>
</dbReference>
<proteinExistence type="evidence at protein level"/>
<sequence length="249" mass="26844">MAPSRKFFVGGNWKMNGRKKCLGELICTLNAAKLPADTEVVCAPPSAYIDFARQKLDPKIAVAAQNCYKVTNGAFTGEISPGMIKDLGAEWVVLGHSERRHVFGESDELIGQKVAHALAEGLGVIACIGEKLDEREAGITEKVVFEQTKVIADNVKDWSKVVLAYEPVWAIGTGKTATPQQAQEVHEKLRGWLKCNVSDEVAQSTRIIYGGSVTGATCKELASQPDVDGFLVGGASLKPEFVDIINAKQ</sequence>
<keyword id="KW-0007">Acetylation</keyword>
<keyword id="KW-0024">Alternative initiation</keyword>
<keyword id="KW-0963">Cytoplasm</keyword>
<keyword id="KW-0312">Gluconeogenesis</keyword>
<keyword id="KW-0324">Glycolysis</keyword>
<keyword id="KW-0413">Isomerase</keyword>
<keyword id="KW-1017">Isopeptide bond</keyword>
<keyword id="KW-0456">Lyase</keyword>
<keyword id="KW-0488">Methylation</keyword>
<keyword id="KW-0944">Nitration</keyword>
<keyword id="KW-0597">Phosphoprotein</keyword>
<keyword id="KW-1185">Reference proteome</keyword>
<keyword id="KW-0832">Ubl conjugation</keyword>
<reference key="1">
    <citation type="journal article" date="2010" name="Asian J. Androl.">
        <title>Glucose-regulated protein precursor (GRP78) and tumor rejection antigen (GP96) are unique to hamster caput epididymal spermatozoa.</title>
        <authorList>
            <person name="Kameshwari D.B."/>
            <person name="Bhande S."/>
            <person name="Sundaram C.S."/>
            <person name="Kota V."/>
            <person name="Siva A.B."/>
            <person name="Shivaji S."/>
        </authorList>
    </citation>
    <scope>IDENTIFICATION BY MASS SPECTROMETRY</scope>
</reference>
<gene>
    <name evidence="4" type="primary">TPI1</name>
</gene>
<protein>
    <recommendedName>
        <fullName evidence="4">Triosephosphate isomerase</fullName>
        <shortName evidence="4">TIM</shortName>
        <ecNumber evidence="5">5.3.1.1</ecNumber>
    </recommendedName>
    <alternativeName>
        <fullName evidence="1">Methylglyoxal synthase</fullName>
        <ecNumber evidence="1">4.2.3.3</ecNumber>
    </alternativeName>
    <alternativeName>
        <fullName evidence="4">Triose-phosphate isomerase</fullName>
    </alternativeName>
</protein>
<comment type="function">
    <text evidence="1">Triosephosphate isomerase is an extremely efficient metabolic enzyme that catalyzes the interconversion between dihydroxyacetone phosphate (DHAP) and D-glyceraldehyde-3-phosphate (G3P) in glycolysis and gluconeogenesis.</text>
</comment>
<comment type="function">
    <text evidence="1">It is also responsible for the non-negligible production of methylglyoxal a reactive cytotoxic side-product that modifies and can alter proteins, DNA and lipids.</text>
</comment>
<comment type="catalytic activity">
    <reaction evidence="5">
        <text>D-glyceraldehyde 3-phosphate = dihydroxyacetone phosphate</text>
        <dbReference type="Rhea" id="RHEA:18585"/>
        <dbReference type="ChEBI" id="CHEBI:57642"/>
        <dbReference type="ChEBI" id="CHEBI:59776"/>
        <dbReference type="EC" id="5.3.1.1"/>
    </reaction>
</comment>
<comment type="catalytic activity">
    <reaction evidence="1">
        <text>dihydroxyacetone phosphate = methylglyoxal + phosphate</text>
        <dbReference type="Rhea" id="RHEA:17937"/>
        <dbReference type="ChEBI" id="CHEBI:17158"/>
        <dbReference type="ChEBI" id="CHEBI:43474"/>
        <dbReference type="ChEBI" id="CHEBI:57642"/>
        <dbReference type="EC" id="4.2.3.3"/>
    </reaction>
</comment>
<comment type="pathway">
    <text evidence="5">Carbohydrate biosynthesis; gluconeogenesis.</text>
</comment>
<comment type="pathway">
    <text evidence="5">Carbohydrate degradation; glycolysis; D-glyceraldehyde 3-phosphate from glycerone phosphate: step 1/1.</text>
</comment>
<comment type="subunit">
    <text evidence="5">Homodimer.</text>
</comment>
<comment type="subcellular location">
    <subcellularLocation>
        <location evidence="5">Cytoplasm</location>
    </subcellularLocation>
</comment>
<comment type="alternative products">
    <event type="alternative initiation"/>
    <isoform>
        <id>P86216-1</id>
        <name>1</name>
        <sequence type="displayed"/>
    </isoform>
    <isoform>
        <id>P86216-2</id>
        <name>2</name>
        <sequence type="described" ref="VSP_060723"/>
    </isoform>
</comment>
<comment type="similarity">
    <text evidence="5">Belongs to the triosephosphate isomerase family.</text>
</comment>